<keyword id="KW-0963">Cytoplasm</keyword>
<keyword id="KW-0378">Hydrolase</keyword>
<keyword id="KW-0479">Metal-binding</keyword>
<keyword id="KW-0547">Nucleotide-binding</keyword>
<organism>
    <name type="scientific">Escherichia coli (strain SE11)</name>
    <dbReference type="NCBI Taxonomy" id="409438"/>
    <lineage>
        <taxon>Bacteria</taxon>
        <taxon>Pseudomonadati</taxon>
        <taxon>Pseudomonadota</taxon>
        <taxon>Gammaproteobacteria</taxon>
        <taxon>Enterobacterales</taxon>
        <taxon>Enterobacteriaceae</taxon>
        <taxon>Escherichia</taxon>
    </lineage>
</organism>
<protein>
    <recommendedName>
        <fullName evidence="1">5'-deoxynucleotidase YfbR</fullName>
        <ecNumber evidence="1">3.1.3.89</ecNumber>
    </recommendedName>
    <alternativeName>
        <fullName evidence="1">5'-deoxyribonucleotidase</fullName>
    </alternativeName>
    <alternativeName>
        <fullName evidence="1">Nucleoside 5'-monophosphate phosphohydrolase</fullName>
    </alternativeName>
</protein>
<name>5DNU_ECOSE</name>
<sequence>MKQSHFFAHLSRLKLINRWPLMRNVRTENVSEHSLQVAMVAHALAAIKNRKFGGNVNAERIALLAMYHDASEVLTGDLPTPVKYFNSQIAQEYKAIEKIAQQKLVDMVPEELRDIFAPLIDEHAYSDEEKSLVKQADALCAYLKCLEELAAGNNEFLLAKTRLEATLEARRSQEMDYFMEVFVPSFHLSLDEISQDSPL</sequence>
<evidence type="ECO:0000255" key="1">
    <source>
        <dbReference type="HAMAP-Rule" id="MF_01100"/>
    </source>
</evidence>
<evidence type="ECO:0000255" key="2">
    <source>
        <dbReference type="PROSITE-ProRule" id="PRU01175"/>
    </source>
</evidence>
<accession>B6I7L3</accession>
<reference key="1">
    <citation type="journal article" date="2008" name="DNA Res.">
        <title>Complete genome sequence and comparative analysis of the wild-type commensal Escherichia coli strain SE11 isolated from a healthy adult.</title>
        <authorList>
            <person name="Oshima K."/>
            <person name="Toh H."/>
            <person name="Ogura Y."/>
            <person name="Sasamoto H."/>
            <person name="Morita H."/>
            <person name="Park S.-H."/>
            <person name="Ooka T."/>
            <person name="Iyoda S."/>
            <person name="Taylor T.D."/>
            <person name="Hayashi T."/>
            <person name="Itoh K."/>
            <person name="Hattori M."/>
        </authorList>
    </citation>
    <scope>NUCLEOTIDE SEQUENCE [LARGE SCALE GENOMIC DNA]</scope>
    <source>
        <strain>SE11</strain>
    </source>
</reference>
<comment type="function">
    <text evidence="1">Catalyzes the strictly specific dephosphorylation of 2'-deoxyribonucleoside 5'-monophosphates.</text>
</comment>
<comment type="catalytic activity">
    <reaction evidence="1">
        <text>a 2'-deoxyribonucleoside 5'-phosphate + H2O = a 2'-deoxyribonucleoside + phosphate</text>
        <dbReference type="Rhea" id="RHEA:36167"/>
        <dbReference type="ChEBI" id="CHEBI:15377"/>
        <dbReference type="ChEBI" id="CHEBI:18274"/>
        <dbReference type="ChEBI" id="CHEBI:43474"/>
        <dbReference type="ChEBI" id="CHEBI:65317"/>
        <dbReference type="EC" id="3.1.3.89"/>
    </reaction>
</comment>
<comment type="cofactor">
    <cofactor evidence="1">
        <name>a divalent metal cation</name>
        <dbReference type="ChEBI" id="CHEBI:60240"/>
    </cofactor>
</comment>
<comment type="subunit">
    <text evidence="1">Homodimer.</text>
</comment>
<comment type="subcellular location">
    <subcellularLocation>
        <location evidence="1">Cytoplasm</location>
    </subcellularLocation>
</comment>
<comment type="similarity">
    <text evidence="1">Belongs to the 5DNU family.</text>
</comment>
<dbReference type="EC" id="3.1.3.89" evidence="1"/>
<dbReference type="EMBL" id="AP009240">
    <property type="protein sequence ID" value="BAG78072.1"/>
    <property type="molecule type" value="Genomic_DNA"/>
</dbReference>
<dbReference type="RefSeq" id="WP_000813860.1">
    <property type="nucleotide sequence ID" value="NC_011415.1"/>
</dbReference>
<dbReference type="SMR" id="B6I7L3"/>
<dbReference type="GeneID" id="93774883"/>
<dbReference type="KEGG" id="ecy:ECSE_2548"/>
<dbReference type="HOGENOM" id="CLU_084784_0_0_6"/>
<dbReference type="Proteomes" id="UP000008199">
    <property type="component" value="Chromosome"/>
</dbReference>
<dbReference type="GO" id="GO:0005737">
    <property type="term" value="C:cytoplasm"/>
    <property type="evidence" value="ECO:0007669"/>
    <property type="project" value="UniProtKB-SubCell"/>
</dbReference>
<dbReference type="GO" id="GO:0002953">
    <property type="term" value="F:5'-deoxynucleotidase activity"/>
    <property type="evidence" value="ECO:0007669"/>
    <property type="project" value="UniProtKB-EC"/>
</dbReference>
<dbReference type="GO" id="GO:0046872">
    <property type="term" value="F:metal ion binding"/>
    <property type="evidence" value="ECO:0007669"/>
    <property type="project" value="UniProtKB-KW"/>
</dbReference>
<dbReference type="GO" id="GO:0000166">
    <property type="term" value="F:nucleotide binding"/>
    <property type="evidence" value="ECO:0007669"/>
    <property type="project" value="UniProtKB-KW"/>
</dbReference>
<dbReference type="CDD" id="cd00077">
    <property type="entry name" value="HDc"/>
    <property type="match status" value="1"/>
</dbReference>
<dbReference type="FunFam" id="1.10.3210.10:FF:000002">
    <property type="entry name" value="Nucleotidase YfbR"/>
    <property type="match status" value="1"/>
</dbReference>
<dbReference type="Gene3D" id="1.10.3210.10">
    <property type="entry name" value="Hypothetical protein af1432"/>
    <property type="match status" value="1"/>
</dbReference>
<dbReference type="HAMAP" id="MF_01100">
    <property type="entry name" value="5DNU"/>
    <property type="match status" value="1"/>
</dbReference>
<dbReference type="InterPro" id="IPR003607">
    <property type="entry name" value="HD/PDEase_dom"/>
</dbReference>
<dbReference type="InterPro" id="IPR006674">
    <property type="entry name" value="HD_domain"/>
</dbReference>
<dbReference type="InterPro" id="IPR022971">
    <property type="entry name" value="YfbR"/>
</dbReference>
<dbReference type="InterPro" id="IPR039356">
    <property type="entry name" value="YfbR/HDDC2"/>
</dbReference>
<dbReference type="NCBIfam" id="NF003009">
    <property type="entry name" value="PRK03826.1"/>
    <property type="match status" value="1"/>
</dbReference>
<dbReference type="PANTHER" id="PTHR11845">
    <property type="entry name" value="5'-DEOXYNUCLEOTIDASE HDDC2"/>
    <property type="match status" value="1"/>
</dbReference>
<dbReference type="PANTHER" id="PTHR11845:SF13">
    <property type="entry name" value="5'-DEOXYNUCLEOTIDASE HDDC2"/>
    <property type="match status" value="1"/>
</dbReference>
<dbReference type="Pfam" id="PF12917">
    <property type="entry name" value="YfbR-like"/>
    <property type="match status" value="1"/>
</dbReference>
<dbReference type="SMART" id="SM00471">
    <property type="entry name" value="HDc"/>
    <property type="match status" value="1"/>
</dbReference>
<dbReference type="SUPFAM" id="SSF109604">
    <property type="entry name" value="HD-domain/PDEase-like"/>
    <property type="match status" value="1"/>
</dbReference>
<dbReference type="PROSITE" id="PS51831">
    <property type="entry name" value="HD"/>
    <property type="match status" value="1"/>
</dbReference>
<feature type="chain" id="PRO_1000136967" description="5'-deoxynucleotidase YfbR">
    <location>
        <begin position="1"/>
        <end position="199"/>
    </location>
</feature>
<feature type="domain" description="HD" evidence="2">
    <location>
        <begin position="30"/>
        <end position="142"/>
    </location>
</feature>
<feature type="binding site" evidence="1">
    <location>
        <begin position="18"/>
        <end position="19"/>
    </location>
    <ligand>
        <name>substrate</name>
    </ligand>
</feature>
<feature type="binding site" evidence="1">
    <location>
        <position position="33"/>
    </location>
    <ligand>
        <name>a divalent metal cation</name>
        <dbReference type="ChEBI" id="CHEBI:60240"/>
    </ligand>
</feature>
<feature type="binding site" evidence="1">
    <location>
        <position position="33"/>
    </location>
    <ligand>
        <name>substrate</name>
    </ligand>
</feature>
<feature type="binding site" evidence="1">
    <location>
        <position position="68"/>
    </location>
    <ligand>
        <name>a divalent metal cation</name>
        <dbReference type="ChEBI" id="CHEBI:60240"/>
    </ligand>
</feature>
<feature type="binding site" evidence="1">
    <location>
        <position position="69"/>
    </location>
    <ligand>
        <name>a divalent metal cation</name>
        <dbReference type="ChEBI" id="CHEBI:60240"/>
    </ligand>
</feature>
<feature type="binding site" evidence="1">
    <location>
        <position position="69"/>
    </location>
    <ligand>
        <name>substrate</name>
    </ligand>
</feature>
<feature type="binding site" evidence="1">
    <location>
        <begin position="77"/>
        <end position="80"/>
    </location>
    <ligand>
        <name>substrate</name>
    </ligand>
</feature>
<feature type="binding site" evidence="1">
    <location>
        <position position="137"/>
    </location>
    <ligand>
        <name>a divalent metal cation</name>
        <dbReference type="ChEBI" id="CHEBI:60240"/>
    </ligand>
</feature>
<feature type="binding site" evidence="1">
    <location>
        <position position="137"/>
    </location>
    <ligand>
        <name>substrate</name>
    </ligand>
</feature>
<feature type="site" description="Appears to be important in orienting the phosphate for catalysis" evidence="1">
    <location>
        <position position="18"/>
    </location>
</feature>
<proteinExistence type="inferred from homology"/>
<gene>
    <name evidence="1" type="primary">yfbR</name>
    <name type="ordered locus">ECSE_2548</name>
</gene>